<reference key="1">
    <citation type="journal article" date="2013" name="G3 (Bethesda)">
        <title>Comparative genomics of a plant-pathogenic fungus, Pyrenophora tritici-repentis, reveals transduplication and the impact of repeat elements on pathogenicity and population divergence.</title>
        <authorList>
            <person name="Manning V.A."/>
            <person name="Pandelova I."/>
            <person name="Dhillon B."/>
            <person name="Wilhelm L.J."/>
            <person name="Goodwin S.B."/>
            <person name="Berlin A.M."/>
            <person name="Figueroa M."/>
            <person name="Freitag M."/>
            <person name="Hane J.K."/>
            <person name="Henrissat B."/>
            <person name="Holman W.H."/>
            <person name="Kodira C.D."/>
            <person name="Martin J."/>
            <person name="Oliver R.P."/>
            <person name="Robbertse B."/>
            <person name="Schackwitz W."/>
            <person name="Schwartz D.C."/>
            <person name="Spatafora J.W."/>
            <person name="Turgeon B.G."/>
            <person name="Yandava C."/>
            <person name="Young S."/>
            <person name="Zhou S."/>
            <person name="Zeng Q."/>
            <person name="Grigoriev I.V."/>
            <person name="Ma L.-J."/>
            <person name="Ciuffetti L.M."/>
        </authorList>
    </citation>
    <scope>NUCLEOTIDE SEQUENCE [LARGE SCALE GENOMIC DNA]</scope>
    <source>
        <strain>Pt-1C-BFP</strain>
    </source>
</reference>
<comment type="function">
    <text evidence="1">Component of the cytosolic iron-sulfur (Fe-S) protein assembly (CIA) machinery required for the maturation of extramitochondrial Fe-S proteins. Part of an electron transfer chain functioning in an early step of cytosolic Fe-S biogenesis, facilitating the de novo assembly of a [4Fe-4S] cluster on the scaffold complex CFD1-NBP35. Electrons are transferred to DRE2 from NADPH via the FAD- and FMN-containing protein TAH18. TAH18-DRE2 are also required for the assembly of the diferric tyrosyl radical cofactor of ribonucleotide reductase (RNR), probably by providing electrons for reduction during radical cofactor maturation in the catalytic small subunit RNR2.</text>
</comment>
<comment type="cofactor">
    <cofactor evidence="1">
        <name>[2Fe-2S] cluster</name>
        <dbReference type="ChEBI" id="CHEBI:190135"/>
    </cofactor>
</comment>
<comment type="cofactor">
    <cofactor evidence="1">
        <name>[4Fe-4S] cluster</name>
        <dbReference type="ChEBI" id="CHEBI:49883"/>
    </cofactor>
</comment>
<comment type="subunit">
    <text evidence="1">Monomer. Interacts with TAH18. Interacts with MIA40.</text>
</comment>
<comment type="subcellular location">
    <subcellularLocation>
        <location evidence="1">Cytoplasm</location>
    </subcellularLocation>
    <subcellularLocation>
        <location evidence="1">Mitochondrion intermembrane space</location>
    </subcellularLocation>
</comment>
<comment type="domain">
    <text evidence="1">The C-terminal domain binds 2 Fe-S clusters but is otherwise mostly in an intrinsically disordered conformation.</text>
</comment>
<comment type="domain">
    <text evidence="1">The N-terminal domain has structural similarity with S-adenosyl-L-methionine-dependent methyltransferases, but does not bind S-adenosyl-L-methionine. It is required for correct assembly of the 2 Fe-S clusters.</text>
</comment>
<comment type="domain">
    <text evidence="1">The twin Cx2C motifs are involved in the recognition by the mitochondrial MIA40-ERV1 disulfide relay system. The formation of 2 disulfide bonds in the Cx2C motifs through dithiol/disulfide exchange reactions effectively traps the protein in the mitochondrial intermembrane space.</text>
</comment>
<comment type="similarity">
    <text evidence="1">Belongs to the anamorsin family.</text>
</comment>
<proteinExistence type="inferred from homology"/>
<protein>
    <recommendedName>
        <fullName evidence="1">Fe-S cluster assembly protein dre2</fullName>
    </recommendedName>
    <alternativeName>
        <fullName evidence="1">Anamorsin homolog</fullName>
    </alternativeName>
</protein>
<gene>
    <name evidence="1" type="primary">dre2</name>
    <name type="ORF">PTRG_04419</name>
</gene>
<feature type="chain" id="PRO_0000392403" description="Fe-S cluster assembly protein dre2">
    <location>
        <begin position="1"/>
        <end position="316"/>
    </location>
</feature>
<feature type="region of interest" description="N-terminal SAM-like domain" evidence="1">
    <location>
        <begin position="1"/>
        <end position="128"/>
    </location>
</feature>
<feature type="region of interest" description="Linker" evidence="1">
    <location>
        <begin position="129"/>
        <end position="208"/>
    </location>
</feature>
<feature type="region of interest" description="Disordered" evidence="2">
    <location>
        <begin position="141"/>
        <end position="177"/>
    </location>
</feature>
<feature type="region of interest" description="Fe-S binding site A" evidence="1">
    <location>
        <begin position="218"/>
        <end position="234"/>
    </location>
</feature>
<feature type="region of interest" description="Fe-S binding site B" evidence="1">
    <location>
        <begin position="279"/>
        <end position="293"/>
    </location>
</feature>
<feature type="short sequence motif" description="Cx2C motif 1" evidence="1">
    <location>
        <begin position="279"/>
        <end position="282"/>
    </location>
</feature>
<feature type="short sequence motif" description="Cx2C motif 2" evidence="1">
    <location>
        <begin position="290"/>
        <end position="293"/>
    </location>
</feature>
<feature type="binding site" evidence="1">
    <location>
        <position position="218"/>
    </location>
    <ligand>
        <name>[2Fe-2S] cluster</name>
        <dbReference type="ChEBI" id="CHEBI:190135"/>
    </ligand>
</feature>
<feature type="binding site" evidence="1">
    <location>
        <position position="229"/>
    </location>
    <ligand>
        <name>[2Fe-2S] cluster</name>
        <dbReference type="ChEBI" id="CHEBI:190135"/>
    </ligand>
</feature>
<feature type="binding site" evidence="1">
    <location>
        <position position="232"/>
    </location>
    <ligand>
        <name>[2Fe-2S] cluster</name>
        <dbReference type="ChEBI" id="CHEBI:190135"/>
    </ligand>
</feature>
<feature type="binding site" evidence="1">
    <location>
        <position position="234"/>
    </location>
    <ligand>
        <name>[2Fe-2S] cluster</name>
        <dbReference type="ChEBI" id="CHEBI:190135"/>
    </ligand>
</feature>
<feature type="binding site" evidence="1">
    <location>
        <position position="279"/>
    </location>
    <ligand>
        <name>[4Fe-4S] cluster</name>
        <dbReference type="ChEBI" id="CHEBI:49883"/>
    </ligand>
</feature>
<feature type="binding site" evidence="1">
    <location>
        <position position="282"/>
    </location>
    <ligand>
        <name>[4Fe-4S] cluster</name>
        <dbReference type="ChEBI" id="CHEBI:49883"/>
    </ligand>
</feature>
<feature type="binding site" evidence="1">
    <location>
        <position position="290"/>
    </location>
    <ligand>
        <name>[4Fe-4S] cluster</name>
        <dbReference type="ChEBI" id="CHEBI:49883"/>
    </ligand>
</feature>
<feature type="binding site" evidence="1">
    <location>
        <position position="293"/>
    </location>
    <ligand>
        <name>[4Fe-4S] cluster</name>
        <dbReference type="ChEBI" id="CHEBI:49883"/>
    </ligand>
</feature>
<organism>
    <name type="scientific">Pyrenophora tritici-repentis (strain Pt-1C-BFP)</name>
    <name type="common">Wheat tan spot fungus</name>
    <name type="synonym">Drechslera tritici-repentis</name>
    <dbReference type="NCBI Taxonomy" id="426418"/>
    <lineage>
        <taxon>Eukaryota</taxon>
        <taxon>Fungi</taxon>
        <taxon>Dikarya</taxon>
        <taxon>Ascomycota</taxon>
        <taxon>Pezizomycotina</taxon>
        <taxon>Dothideomycetes</taxon>
        <taxon>Pleosporomycetidae</taxon>
        <taxon>Pleosporales</taxon>
        <taxon>Pleosporineae</taxon>
        <taxon>Pleosporaceae</taxon>
        <taxon>Pyrenophora</taxon>
    </lineage>
</organism>
<accession>B2W1T4</accession>
<evidence type="ECO:0000255" key="1">
    <source>
        <dbReference type="HAMAP-Rule" id="MF_03115"/>
    </source>
</evidence>
<evidence type="ECO:0000256" key="2">
    <source>
        <dbReference type="SAM" id="MobiDB-lite"/>
    </source>
</evidence>
<name>DRE2_PYRTR</name>
<dbReference type="EMBL" id="DS231617">
    <property type="protein sequence ID" value="EDU47257.1"/>
    <property type="molecule type" value="Genomic_DNA"/>
</dbReference>
<dbReference type="RefSeq" id="XP_001934752.1">
    <property type="nucleotide sequence ID" value="XM_001934717.1"/>
</dbReference>
<dbReference type="SMR" id="B2W1T4"/>
<dbReference type="FunCoup" id="B2W1T4">
    <property type="interactions" value="165"/>
</dbReference>
<dbReference type="STRING" id="426418.B2W1T4"/>
<dbReference type="EnsemblFungi" id="EDU47257">
    <property type="protein sequence ID" value="EDU47257"/>
    <property type="gene ID" value="PTRG_04419"/>
</dbReference>
<dbReference type="GeneID" id="6342659"/>
<dbReference type="KEGG" id="ptrr:6342659"/>
<dbReference type="eggNOG" id="KOG4020">
    <property type="taxonomic scope" value="Eukaryota"/>
</dbReference>
<dbReference type="HOGENOM" id="CLU_067152_1_0_1"/>
<dbReference type="InParanoid" id="B2W1T4"/>
<dbReference type="OMA" id="DFVMPVT"/>
<dbReference type="OrthoDB" id="22173at28556"/>
<dbReference type="Proteomes" id="UP000001471">
    <property type="component" value="Unassembled WGS sequence"/>
</dbReference>
<dbReference type="GO" id="GO:0097361">
    <property type="term" value="C:cytosolic [4Fe-4S] assembly targeting complex"/>
    <property type="evidence" value="ECO:0007669"/>
    <property type="project" value="EnsemblFungi"/>
</dbReference>
<dbReference type="GO" id="GO:0005758">
    <property type="term" value="C:mitochondrial intermembrane space"/>
    <property type="evidence" value="ECO:0007669"/>
    <property type="project" value="UniProtKB-SubCell"/>
</dbReference>
<dbReference type="GO" id="GO:0051537">
    <property type="term" value="F:2 iron, 2 sulfur cluster binding"/>
    <property type="evidence" value="ECO:0007669"/>
    <property type="project" value="UniProtKB-UniRule"/>
</dbReference>
<dbReference type="GO" id="GO:0051539">
    <property type="term" value="F:4 iron, 4 sulfur cluster binding"/>
    <property type="evidence" value="ECO:0007669"/>
    <property type="project" value="UniProtKB-KW"/>
</dbReference>
<dbReference type="GO" id="GO:0009055">
    <property type="term" value="F:electron transfer activity"/>
    <property type="evidence" value="ECO:0007669"/>
    <property type="project" value="UniProtKB-UniRule"/>
</dbReference>
<dbReference type="GO" id="GO:0046872">
    <property type="term" value="F:metal ion binding"/>
    <property type="evidence" value="ECO:0007669"/>
    <property type="project" value="UniProtKB-KW"/>
</dbReference>
<dbReference type="GO" id="GO:0034599">
    <property type="term" value="P:cellular response to oxidative stress"/>
    <property type="evidence" value="ECO:0007669"/>
    <property type="project" value="EnsemblFungi"/>
</dbReference>
<dbReference type="GO" id="GO:0016226">
    <property type="term" value="P:iron-sulfur cluster assembly"/>
    <property type="evidence" value="ECO:0007669"/>
    <property type="project" value="UniProtKB-UniRule"/>
</dbReference>
<dbReference type="GO" id="GO:1901299">
    <property type="term" value="P:negative regulation of hydrogen peroxide-mediated programmed cell death"/>
    <property type="evidence" value="ECO:0007669"/>
    <property type="project" value="EnsemblFungi"/>
</dbReference>
<dbReference type="GO" id="GO:0045019">
    <property type="term" value="P:negative regulation of nitric oxide biosynthetic process"/>
    <property type="evidence" value="ECO:0007669"/>
    <property type="project" value="EnsemblFungi"/>
</dbReference>
<dbReference type="Gene3D" id="3.40.50.11000">
    <property type="entry name" value="Fe-S cluster assembly protein Dre2, N-terminal domain"/>
    <property type="match status" value="1"/>
</dbReference>
<dbReference type="HAMAP" id="MF_03115">
    <property type="entry name" value="Anamorsin"/>
    <property type="match status" value="1"/>
</dbReference>
<dbReference type="InterPro" id="IPR007785">
    <property type="entry name" value="Anamorsin"/>
</dbReference>
<dbReference type="InterPro" id="IPR046408">
    <property type="entry name" value="CIAPIN1"/>
</dbReference>
<dbReference type="InterPro" id="IPR031838">
    <property type="entry name" value="Dre2_N"/>
</dbReference>
<dbReference type="PANTHER" id="PTHR13273">
    <property type="entry name" value="ANAMORSIN"/>
    <property type="match status" value="1"/>
</dbReference>
<dbReference type="PANTHER" id="PTHR13273:SF14">
    <property type="entry name" value="ANAMORSIN"/>
    <property type="match status" value="1"/>
</dbReference>
<dbReference type="Pfam" id="PF05093">
    <property type="entry name" value="CIAPIN1"/>
    <property type="match status" value="1"/>
</dbReference>
<dbReference type="Pfam" id="PF16803">
    <property type="entry name" value="DRE2_N"/>
    <property type="match status" value="1"/>
</dbReference>
<sequence>MAPRCLLIGTPSIAAHPERLDQVYEIHHRSSTDLQMLDRIAAGLVNLPAATYDVVLLLADADGTTRESHKLFSRDVMNKVASALKIGGVLKSQAGPFQGAEKTEAILAGLTETEDGMAKPEQEEPVSIPLKFGKNKANGVSATNGTNGAVNPDGSVPLNLNRKRDQPEPVKPAGVGFVDFSDDLDDPIITGEDDDLIDEDDLITEADMARPVVQPLECQPKPGKRRRACKDCTCGMKEKLEAEDAAKRSSADKALNSLKLDADDLAEVDFTVQGKVGSCGNCALGDAFRCDGCPYIGLPAFKPGEEVRLLNNDIQL</sequence>
<keyword id="KW-0001">2Fe-2S</keyword>
<keyword id="KW-0004">4Fe-4S</keyword>
<keyword id="KW-0963">Cytoplasm</keyword>
<keyword id="KW-0408">Iron</keyword>
<keyword id="KW-0411">Iron-sulfur</keyword>
<keyword id="KW-0479">Metal-binding</keyword>
<keyword id="KW-0496">Mitochondrion</keyword>
<keyword id="KW-1185">Reference proteome</keyword>